<keyword id="KW-0274">FAD</keyword>
<keyword id="KW-0285">Flavoprotein</keyword>
<keyword id="KW-0521">NADP</keyword>
<keyword id="KW-0560">Oxidoreductase</keyword>
<sequence>MQELDLIIVGAGPVGLYAAFYAGMRGLSVAIIESAQVAGGQPQNLYPEKLIYDIAGLPAVTGADLTKNLLEQLAQISHRLFLGEGVQKIEKEDGIFSVITDKSNRKAKAVLLTTGAGLLKPRKLGIDNEENLANEGKISYFITSLKEFEGKNVAVFGGGDSALDWSLMLEKVAKEVHLVHRRTAFRGHEMTVDRVMDSGIQVHTPYTFSNFNENDLELKKVKAEENLNFSIDKILVNYGFLTNQVSLAENLEVSRNGRVKADSMMQSNIEGLYVAGDASDYAGKMPLMSVGFGEAVHAINAMTKNLEFNHPLRGGHSSSIF</sequence>
<name>FENR_LACLM</name>
<feature type="chain" id="PRO_0000364863" description="Ferredoxin--NADP reductase">
    <location>
        <begin position="1"/>
        <end position="321"/>
    </location>
</feature>
<feature type="binding site" evidence="1">
    <location>
        <position position="33"/>
    </location>
    <ligand>
        <name>FAD</name>
        <dbReference type="ChEBI" id="CHEBI:57692"/>
    </ligand>
</feature>
<feature type="binding site" evidence="1">
    <location>
        <position position="41"/>
    </location>
    <ligand>
        <name>FAD</name>
        <dbReference type="ChEBI" id="CHEBI:57692"/>
    </ligand>
</feature>
<feature type="binding site" evidence="1">
    <location>
        <position position="46"/>
    </location>
    <ligand>
        <name>FAD</name>
        <dbReference type="ChEBI" id="CHEBI:57692"/>
    </ligand>
</feature>
<feature type="binding site" evidence="1">
    <location>
        <position position="86"/>
    </location>
    <ligand>
        <name>FAD</name>
        <dbReference type="ChEBI" id="CHEBI:57692"/>
    </ligand>
</feature>
<feature type="binding site" evidence="1">
    <location>
        <position position="119"/>
    </location>
    <ligand>
        <name>FAD</name>
        <dbReference type="ChEBI" id="CHEBI:57692"/>
    </ligand>
</feature>
<feature type="binding site" evidence="1">
    <location>
        <position position="277"/>
    </location>
    <ligand>
        <name>FAD</name>
        <dbReference type="ChEBI" id="CHEBI:57692"/>
    </ligand>
</feature>
<feature type="binding site" evidence="1">
    <location>
        <position position="318"/>
    </location>
    <ligand>
        <name>FAD</name>
        <dbReference type="ChEBI" id="CHEBI:57692"/>
    </ligand>
</feature>
<dbReference type="EC" id="1.18.1.2" evidence="1"/>
<dbReference type="EMBL" id="AM406671">
    <property type="protein sequence ID" value="CAL97378.1"/>
    <property type="molecule type" value="Genomic_DNA"/>
</dbReference>
<dbReference type="RefSeq" id="WP_011834757.1">
    <property type="nucleotide sequence ID" value="NC_009004.1"/>
</dbReference>
<dbReference type="SMR" id="A2RJC6"/>
<dbReference type="STRING" id="416870.llmg_0776"/>
<dbReference type="KEGG" id="llm:llmg_0776"/>
<dbReference type="eggNOG" id="COG0492">
    <property type="taxonomic scope" value="Bacteria"/>
</dbReference>
<dbReference type="HOGENOM" id="CLU_031864_5_5_9"/>
<dbReference type="OrthoDB" id="9806179at2"/>
<dbReference type="PhylomeDB" id="A2RJC6"/>
<dbReference type="Proteomes" id="UP000000364">
    <property type="component" value="Chromosome"/>
</dbReference>
<dbReference type="GO" id="GO:0004324">
    <property type="term" value="F:ferredoxin-NADP+ reductase activity"/>
    <property type="evidence" value="ECO:0007669"/>
    <property type="project" value="UniProtKB-UniRule"/>
</dbReference>
<dbReference type="GO" id="GO:0050660">
    <property type="term" value="F:flavin adenine dinucleotide binding"/>
    <property type="evidence" value="ECO:0007669"/>
    <property type="project" value="UniProtKB-UniRule"/>
</dbReference>
<dbReference type="GO" id="GO:0050661">
    <property type="term" value="F:NADP binding"/>
    <property type="evidence" value="ECO:0007669"/>
    <property type="project" value="UniProtKB-UniRule"/>
</dbReference>
<dbReference type="Gene3D" id="3.50.50.60">
    <property type="entry name" value="FAD/NAD(P)-binding domain"/>
    <property type="match status" value="2"/>
</dbReference>
<dbReference type="HAMAP" id="MF_01685">
    <property type="entry name" value="FENR2"/>
    <property type="match status" value="1"/>
</dbReference>
<dbReference type="InterPro" id="IPR036188">
    <property type="entry name" value="FAD/NAD-bd_sf"/>
</dbReference>
<dbReference type="InterPro" id="IPR023753">
    <property type="entry name" value="FAD/NAD-binding_dom"/>
</dbReference>
<dbReference type="InterPro" id="IPR022890">
    <property type="entry name" value="Fd--NADP_Rdtase_type_2"/>
</dbReference>
<dbReference type="InterPro" id="IPR050097">
    <property type="entry name" value="Ferredoxin-NADP_redctase_2"/>
</dbReference>
<dbReference type="PANTHER" id="PTHR48105">
    <property type="entry name" value="THIOREDOXIN REDUCTASE 1-RELATED-RELATED"/>
    <property type="match status" value="1"/>
</dbReference>
<dbReference type="Pfam" id="PF07992">
    <property type="entry name" value="Pyr_redox_2"/>
    <property type="match status" value="1"/>
</dbReference>
<dbReference type="PRINTS" id="PR00368">
    <property type="entry name" value="FADPNR"/>
</dbReference>
<dbReference type="PRINTS" id="PR00469">
    <property type="entry name" value="PNDRDTASEII"/>
</dbReference>
<dbReference type="SUPFAM" id="SSF51905">
    <property type="entry name" value="FAD/NAD(P)-binding domain"/>
    <property type="match status" value="1"/>
</dbReference>
<proteinExistence type="inferred from homology"/>
<reference key="1">
    <citation type="journal article" date="2007" name="J. Bacteriol.">
        <title>The complete genome sequence of the lactic acid bacterial paradigm Lactococcus lactis subsp. cremoris MG1363.</title>
        <authorList>
            <person name="Wegmann U."/>
            <person name="O'Connell-Motherway M."/>
            <person name="Zomer A."/>
            <person name="Buist G."/>
            <person name="Shearman C."/>
            <person name="Canchaya C."/>
            <person name="Ventura M."/>
            <person name="Goesmann A."/>
            <person name="Gasson M.J."/>
            <person name="Kuipers O.P."/>
            <person name="van Sinderen D."/>
            <person name="Kok J."/>
        </authorList>
    </citation>
    <scope>NUCLEOTIDE SEQUENCE [LARGE SCALE GENOMIC DNA]</scope>
    <source>
        <strain>MG1363</strain>
    </source>
</reference>
<accession>A2RJC6</accession>
<evidence type="ECO:0000255" key="1">
    <source>
        <dbReference type="HAMAP-Rule" id="MF_01685"/>
    </source>
</evidence>
<organism>
    <name type="scientific">Lactococcus lactis subsp. cremoris (strain MG1363)</name>
    <dbReference type="NCBI Taxonomy" id="416870"/>
    <lineage>
        <taxon>Bacteria</taxon>
        <taxon>Bacillati</taxon>
        <taxon>Bacillota</taxon>
        <taxon>Bacilli</taxon>
        <taxon>Lactobacillales</taxon>
        <taxon>Streptococcaceae</taxon>
        <taxon>Lactococcus</taxon>
        <taxon>Lactococcus cremoris subsp. cremoris</taxon>
    </lineage>
</organism>
<comment type="catalytic activity">
    <reaction evidence="1">
        <text>2 reduced [2Fe-2S]-[ferredoxin] + NADP(+) + H(+) = 2 oxidized [2Fe-2S]-[ferredoxin] + NADPH</text>
        <dbReference type="Rhea" id="RHEA:20125"/>
        <dbReference type="Rhea" id="RHEA-COMP:10000"/>
        <dbReference type="Rhea" id="RHEA-COMP:10001"/>
        <dbReference type="ChEBI" id="CHEBI:15378"/>
        <dbReference type="ChEBI" id="CHEBI:33737"/>
        <dbReference type="ChEBI" id="CHEBI:33738"/>
        <dbReference type="ChEBI" id="CHEBI:57783"/>
        <dbReference type="ChEBI" id="CHEBI:58349"/>
        <dbReference type="EC" id="1.18.1.2"/>
    </reaction>
</comment>
<comment type="cofactor">
    <cofactor evidence="1">
        <name>FAD</name>
        <dbReference type="ChEBI" id="CHEBI:57692"/>
    </cofactor>
    <text evidence="1">Binds 1 FAD per subunit.</text>
</comment>
<comment type="subunit">
    <text evidence="1">Homodimer.</text>
</comment>
<comment type="similarity">
    <text evidence="1">Belongs to the ferredoxin--NADP reductase type 2 family.</text>
</comment>
<gene>
    <name type="ordered locus">llmg_0776</name>
</gene>
<protein>
    <recommendedName>
        <fullName evidence="1">Ferredoxin--NADP reductase</fullName>
        <shortName evidence="1">FNR</shortName>
        <shortName evidence="1">Fd-NADP(+) reductase</shortName>
        <ecNumber evidence="1">1.18.1.2</ecNumber>
    </recommendedName>
</protein>